<comment type="function">
    <text evidence="1">Catalyzes a reversible aldol reaction between acetaldehyde and D-glyceraldehyde 3-phosphate to generate 2-deoxy-D-ribose 5-phosphate.</text>
</comment>
<comment type="catalytic activity">
    <reaction evidence="1">
        <text>2-deoxy-D-ribose 5-phosphate = D-glyceraldehyde 3-phosphate + acetaldehyde</text>
        <dbReference type="Rhea" id="RHEA:12821"/>
        <dbReference type="ChEBI" id="CHEBI:15343"/>
        <dbReference type="ChEBI" id="CHEBI:59776"/>
        <dbReference type="ChEBI" id="CHEBI:62877"/>
        <dbReference type="EC" id="4.1.2.4"/>
    </reaction>
</comment>
<comment type="pathway">
    <text evidence="1">Carbohydrate degradation; 2-deoxy-D-ribose 1-phosphate degradation; D-glyceraldehyde 3-phosphate and acetaldehyde from 2-deoxy-alpha-D-ribose 1-phosphate: step 2/2.</text>
</comment>
<comment type="subcellular location">
    <subcellularLocation>
        <location evidence="1">Cytoplasm</location>
    </subcellularLocation>
</comment>
<comment type="similarity">
    <text evidence="1">Belongs to the DeoC/FbaB aldolase family. DeoC type 1 subfamily.</text>
</comment>
<keyword id="KW-0963">Cytoplasm</keyword>
<keyword id="KW-0456">Lyase</keyword>
<keyword id="KW-1185">Reference proteome</keyword>
<keyword id="KW-0704">Schiff base</keyword>
<accession>B8E0F1</accession>
<gene>
    <name evidence="1" type="primary">deoC</name>
    <name type="ordered locus">Dtur_1322</name>
</gene>
<organism>
    <name type="scientific">Dictyoglomus turgidum (strain DSM 6724 / Z-1310)</name>
    <dbReference type="NCBI Taxonomy" id="515635"/>
    <lineage>
        <taxon>Bacteria</taxon>
        <taxon>Pseudomonadati</taxon>
        <taxon>Dictyoglomota</taxon>
        <taxon>Dictyoglomia</taxon>
        <taxon>Dictyoglomales</taxon>
        <taxon>Dictyoglomaceae</taxon>
        <taxon>Dictyoglomus</taxon>
    </lineage>
</organism>
<evidence type="ECO:0000255" key="1">
    <source>
        <dbReference type="HAMAP-Rule" id="MF_00114"/>
    </source>
</evidence>
<feature type="chain" id="PRO_1000117544" description="Deoxyribose-phosphate aldolase">
    <location>
        <begin position="1"/>
        <end position="219"/>
    </location>
</feature>
<feature type="active site" description="Proton donor/acceptor" evidence="1">
    <location>
        <position position="92"/>
    </location>
</feature>
<feature type="active site" description="Schiff-base intermediate with acetaldehyde" evidence="1">
    <location>
        <position position="154"/>
    </location>
</feature>
<feature type="active site" description="Proton donor/acceptor" evidence="1">
    <location>
        <position position="183"/>
    </location>
</feature>
<name>DEOC_DICTD</name>
<dbReference type="EC" id="4.1.2.4" evidence="1"/>
<dbReference type="EMBL" id="CP001251">
    <property type="protein sequence ID" value="ACK42596.1"/>
    <property type="molecule type" value="Genomic_DNA"/>
</dbReference>
<dbReference type="RefSeq" id="WP_012583678.1">
    <property type="nucleotide sequence ID" value="NC_011661.1"/>
</dbReference>
<dbReference type="RefSeq" id="YP_002353210.1">
    <property type="nucleotide sequence ID" value="NC_011661.1"/>
</dbReference>
<dbReference type="SMR" id="B8E0F1"/>
<dbReference type="FunCoup" id="B8E0F1">
    <property type="interactions" value="204"/>
</dbReference>
<dbReference type="STRING" id="515635.Dtur_1322"/>
<dbReference type="EnsemblBacteria" id="ACK42596">
    <property type="protein sequence ID" value="ACK42596"/>
    <property type="gene ID" value="Dtur_1322"/>
</dbReference>
<dbReference type="KEGG" id="dtu:Dtur_1322"/>
<dbReference type="PATRIC" id="fig|515635.4.peg.1367"/>
<dbReference type="eggNOG" id="COG0274">
    <property type="taxonomic scope" value="Bacteria"/>
</dbReference>
<dbReference type="HOGENOM" id="CLU_053595_0_1_0"/>
<dbReference type="InParanoid" id="B8E0F1"/>
<dbReference type="OrthoDB" id="9778711at2"/>
<dbReference type="UniPathway" id="UPA00002">
    <property type="reaction ID" value="UER00468"/>
</dbReference>
<dbReference type="Proteomes" id="UP000007719">
    <property type="component" value="Chromosome"/>
</dbReference>
<dbReference type="GO" id="GO:0005737">
    <property type="term" value="C:cytoplasm"/>
    <property type="evidence" value="ECO:0007669"/>
    <property type="project" value="UniProtKB-SubCell"/>
</dbReference>
<dbReference type="GO" id="GO:0004139">
    <property type="term" value="F:deoxyribose-phosphate aldolase activity"/>
    <property type="evidence" value="ECO:0000318"/>
    <property type="project" value="GO_Central"/>
</dbReference>
<dbReference type="GO" id="GO:0006018">
    <property type="term" value="P:2-deoxyribose 1-phosphate catabolic process"/>
    <property type="evidence" value="ECO:0007669"/>
    <property type="project" value="UniProtKB-UniRule"/>
</dbReference>
<dbReference type="GO" id="GO:0016052">
    <property type="term" value="P:carbohydrate catabolic process"/>
    <property type="evidence" value="ECO:0000318"/>
    <property type="project" value="GO_Central"/>
</dbReference>
<dbReference type="GO" id="GO:0009264">
    <property type="term" value="P:deoxyribonucleotide catabolic process"/>
    <property type="evidence" value="ECO:0000318"/>
    <property type="project" value="GO_Central"/>
</dbReference>
<dbReference type="CDD" id="cd00959">
    <property type="entry name" value="DeoC"/>
    <property type="match status" value="1"/>
</dbReference>
<dbReference type="FunFam" id="3.20.20.70:FF:000044">
    <property type="entry name" value="Deoxyribose-phosphate aldolase"/>
    <property type="match status" value="1"/>
</dbReference>
<dbReference type="Gene3D" id="3.20.20.70">
    <property type="entry name" value="Aldolase class I"/>
    <property type="match status" value="1"/>
</dbReference>
<dbReference type="HAMAP" id="MF_00114">
    <property type="entry name" value="DeoC_type1"/>
    <property type="match status" value="1"/>
</dbReference>
<dbReference type="InterPro" id="IPR013785">
    <property type="entry name" value="Aldolase_TIM"/>
</dbReference>
<dbReference type="InterPro" id="IPR011343">
    <property type="entry name" value="DeoC"/>
</dbReference>
<dbReference type="InterPro" id="IPR002915">
    <property type="entry name" value="DeoC/FbaB/LacD_aldolase"/>
</dbReference>
<dbReference type="InterPro" id="IPR028581">
    <property type="entry name" value="DeoC_typeI"/>
</dbReference>
<dbReference type="NCBIfam" id="TIGR00126">
    <property type="entry name" value="deoC"/>
    <property type="match status" value="1"/>
</dbReference>
<dbReference type="PANTHER" id="PTHR10889">
    <property type="entry name" value="DEOXYRIBOSE-PHOSPHATE ALDOLASE"/>
    <property type="match status" value="1"/>
</dbReference>
<dbReference type="PANTHER" id="PTHR10889:SF1">
    <property type="entry name" value="DEOXYRIBOSE-PHOSPHATE ALDOLASE"/>
    <property type="match status" value="1"/>
</dbReference>
<dbReference type="Pfam" id="PF01791">
    <property type="entry name" value="DeoC"/>
    <property type="match status" value="1"/>
</dbReference>
<dbReference type="PIRSF" id="PIRSF001357">
    <property type="entry name" value="DeoC"/>
    <property type="match status" value="1"/>
</dbReference>
<dbReference type="SMART" id="SM01133">
    <property type="entry name" value="DeoC"/>
    <property type="match status" value="1"/>
</dbReference>
<dbReference type="SUPFAM" id="SSF51569">
    <property type="entry name" value="Aldolase"/>
    <property type="match status" value="1"/>
</dbReference>
<sequence length="219" mass="24204">MNRYELAQKIDHTLLRPNISLLDIERLCNEAKEFGFYSVCINPYYIPYAKELLKDTKVKICTVIDFPLGASTTSMKVYQVRESLKLGAEEFDMVINIGALKDKKRDYLISEIREVVKAAEGKVVKVIIETCYLTDEEKIYATEIIKEGGAHFVKTSTGFGPQGATVQDVRLLKSIAGNDLKVKASGGIRTFEQALEMINAGADRIGTSSGVSIINGLGK</sequence>
<reference key="1">
    <citation type="journal article" date="2016" name="Front. Microbiol.">
        <title>The complete genome sequence of hyperthermophile Dictyoglomus turgidum DSM 6724 reveals a specialized carbohydrate fermentor.</title>
        <authorList>
            <person name="Brumm P.J."/>
            <person name="Gowda K."/>
            <person name="Robb F.T."/>
            <person name="Mead D.A."/>
        </authorList>
    </citation>
    <scope>NUCLEOTIDE SEQUENCE [LARGE SCALE GENOMIC DNA]</scope>
    <source>
        <strain>DSM 6724 / Z-1310</strain>
    </source>
</reference>
<proteinExistence type="inferred from homology"/>
<protein>
    <recommendedName>
        <fullName evidence="1">Deoxyribose-phosphate aldolase</fullName>
        <shortName evidence="1">DERA</shortName>
        <ecNumber evidence="1">4.1.2.4</ecNumber>
    </recommendedName>
    <alternativeName>
        <fullName evidence="1">2-deoxy-D-ribose 5-phosphate aldolase</fullName>
    </alternativeName>
    <alternativeName>
        <fullName evidence="1">Phosphodeoxyriboaldolase</fullName>
        <shortName evidence="1">Deoxyriboaldolase</shortName>
    </alternativeName>
</protein>